<sequence length="172" mass="18808">MSDQQQQQPGQDGQPFFNIQRVYLKDLSLEQPNSPHIFLEQEQPSVEVQVDVAASQLAEGVFEVTVIGTVTTKVQEKVAFLVEAKQAGIFDIRNVPAEQMDPLLGIACPTIVYPYLRSNIADTIGRAGFQPIHLAEINFQALYEQRLAAAMEQQGQAGGTGLVMPDGSKATH</sequence>
<organism>
    <name type="scientific">Ralstonia pickettii (strain 12J)</name>
    <dbReference type="NCBI Taxonomy" id="402626"/>
    <lineage>
        <taxon>Bacteria</taxon>
        <taxon>Pseudomonadati</taxon>
        <taxon>Pseudomonadota</taxon>
        <taxon>Betaproteobacteria</taxon>
        <taxon>Burkholderiales</taxon>
        <taxon>Burkholderiaceae</taxon>
        <taxon>Ralstonia</taxon>
    </lineage>
</organism>
<accession>B2UE35</accession>
<dbReference type="EMBL" id="CP001068">
    <property type="protein sequence ID" value="ACD25375.1"/>
    <property type="molecule type" value="Genomic_DNA"/>
</dbReference>
<dbReference type="SMR" id="B2UE35"/>
<dbReference type="STRING" id="402626.Rpic_0212"/>
<dbReference type="KEGG" id="rpi:Rpic_0212"/>
<dbReference type="eggNOG" id="COG1952">
    <property type="taxonomic scope" value="Bacteria"/>
</dbReference>
<dbReference type="HOGENOM" id="CLU_111574_1_0_4"/>
<dbReference type="GO" id="GO:0005737">
    <property type="term" value="C:cytoplasm"/>
    <property type="evidence" value="ECO:0007669"/>
    <property type="project" value="UniProtKB-SubCell"/>
</dbReference>
<dbReference type="GO" id="GO:0051082">
    <property type="term" value="F:unfolded protein binding"/>
    <property type="evidence" value="ECO:0007669"/>
    <property type="project" value="InterPro"/>
</dbReference>
<dbReference type="GO" id="GO:0006457">
    <property type="term" value="P:protein folding"/>
    <property type="evidence" value="ECO:0007669"/>
    <property type="project" value="UniProtKB-UniRule"/>
</dbReference>
<dbReference type="GO" id="GO:0051262">
    <property type="term" value="P:protein tetramerization"/>
    <property type="evidence" value="ECO:0007669"/>
    <property type="project" value="InterPro"/>
</dbReference>
<dbReference type="GO" id="GO:0015031">
    <property type="term" value="P:protein transport"/>
    <property type="evidence" value="ECO:0007669"/>
    <property type="project" value="UniProtKB-UniRule"/>
</dbReference>
<dbReference type="Gene3D" id="3.10.420.10">
    <property type="entry name" value="SecB-like"/>
    <property type="match status" value="1"/>
</dbReference>
<dbReference type="HAMAP" id="MF_00821">
    <property type="entry name" value="SecB"/>
    <property type="match status" value="1"/>
</dbReference>
<dbReference type="InterPro" id="IPR003708">
    <property type="entry name" value="SecB"/>
</dbReference>
<dbReference type="InterPro" id="IPR035958">
    <property type="entry name" value="SecB-like_sf"/>
</dbReference>
<dbReference type="NCBIfam" id="NF004394">
    <property type="entry name" value="PRK05751.1-5"/>
    <property type="match status" value="1"/>
</dbReference>
<dbReference type="NCBIfam" id="TIGR00809">
    <property type="entry name" value="secB"/>
    <property type="match status" value="1"/>
</dbReference>
<dbReference type="PANTHER" id="PTHR36918">
    <property type="match status" value="1"/>
</dbReference>
<dbReference type="PANTHER" id="PTHR36918:SF1">
    <property type="entry name" value="PROTEIN-EXPORT PROTEIN SECB"/>
    <property type="match status" value="1"/>
</dbReference>
<dbReference type="Pfam" id="PF02556">
    <property type="entry name" value="SecB"/>
    <property type="match status" value="1"/>
</dbReference>
<dbReference type="PRINTS" id="PR01594">
    <property type="entry name" value="SECBCHAPRONE"/>
</dbReference>
<dbReference type="SUPFAM" id="SSF54611">
    <property type="entry name" value="SecB-like"/>
    <property type="match status" value="1"/>
</dbReference>
<comment type="function">
    <text evidence="1">One of the proteins required for the normal export of preproteins out of the cell cytoplasm. It is a molecular chaperone that binds to a subset of precursor proteins, maintaining them in a translocation-competent state. It also specifically binds to its receptor SecA.</text>
</comment>
<comment type="subunit">
    <text evidence="1">Homotetramer, a dimer of dimers. One homotetramer interacts with 1 SecA dimer.</text>
</comment>
<comment type="subcellular location">
    <subcellularLocation>
        <location evidence="1">Cytoplasm</location>
    </subcellularLocation>
</comment>
<comment type="similarity">
    <text evidence="1">Belongs to the SecB family.</text>
</comment>
<keyword id="KW-0143">Chaperone</keyword>
<keyword id="KW-0963">Cytoplasm</keyword>
<keyword id="KW-0653">Protein transport</keyword>
<keyword id="KW-0811">Translocation</keyword>
<keyword id="KW-0813">Transport</keyword>
<feature type="chain" id="PRO_1000195334" description="Protein-export protein SecB">
    <location>
        <begin position="1"/>
        <end position="172"/>
    </location>
</feature>
<reference key="1">
    <citation type="submission" date="2008-05" db="EMBL/GenBank/DDBJ databases">
        <title>Complete sequence of chromosome 1 of Ralstonia pickettii 12J.</title>
        <authorList>
            <person name="Lucas S."/>
            <person name="Copeland A."/>
            <person name="Lapidus A."/>
            <person name="Glavina del Rio T."/>
            <person name="Dalin E."/>
            <person name="Tice H."/>
            <person name="Bruce D."/>
            <person name="Goodwin L."/>
            <person name="Pitluck S."/>
            <person name="Meincke L."/>
            <person name="Brettin T."/>
            <person name="Detter J.C."/>
            <person name="Han C."/>
            <person name="Kuske C.R."/>
            <person name="Schmutz J."/>
            <person name="Larimer F."/>
            <person name="Land M."/>
            <person name="Hauser L."/>
            <person name="Kyrpides N."/>
            <person name="Mikhailova N."/>
            <person name="Marsh T."/>
            <person name="Richardson P."/>
        </authorList>
    </citation>
    <scope>NUCLEOTIDE SEQUENCE [LARGE SCALE GENOMIC DNA]</scope>
    <source>
        <strain>12J</strain>
    </source>
</reference>
<name>SECB_RALPJ</name>
<protein>
    <recommendedName>
        <fullName evidence="1">Protein-export protein SecB</fullName>
    </recommendedName>
</protein>
<evidence type="ECO:0000255" key="1">
    <source>
        <dbReference type="HAMAP-Rule" id="MF_00821"/>
    </source>
</evidence>
<gene>
    <name evidence="1" type="primary">secB</name>
    <name type="ordered locus">Rpic_0212</name>
</gene>
<proteinExistence type="inferred from homology"/>